<evidence type="ECO:0000255" key="1">
    <source>
        <dbReference type="HAMAP-Rule" id="MF_00531"/>
    </source>
</evidence>
<evidence type="ECO:0000305" key="2"/>
<proteinExistence type="inferred from homology"/>
<keyword id="KW-0687">Ribonucleoprotein</keyword>
<keyword id="KW-0689">Ribosomal protein</keyword>
<keyword id="KW-0694">RNA-binding</keyword>
<keyword id="KW-0699">rRNA-binding</keyword>
<gene>
    <name evidence="1" type="primary">rpsS</name>
    <name type="ordered locus">CAB097</name>
</gene>
<comment type="function">
    <text evidence="1">Protein S19 forms a complex with S13 that binds strongly to the 16S ribosomal RNA.</text>
</comment>
<comment type="similarity">
    <text evidence="1">Belongs to the universal ribosomal protein uS19 family.</text>
</comment>
<dbReference type="EMBL" id="CR848038">
    <property type="protein sequence ID" value="CAH63554.1"/>
    <property type="molecule type" value="Genomic_DNA"/>
</dbReference>
<dbReference type="RefSeq" id="WP_006342772.1">
    <property type="nucleotide sequence ID" value="NC_004552.2"/>
</dbReference>
<dbReference type="SMR" id="Q5L716"/>
<dbReference type="GeneID" id="93024643"/>
<dbReference type="KEGG" id="cab:CAB097"/>
<dbReference type="eggNOG" id="COG0185">
    <property type="taxonomic scope" value="Bacteria"/>
</dbReference>
<dbReference type="HOGENOM" id="CLU_144911_0_1_0"/>
<dbReference type="OrthoDB" id="9797833at2"/>
<dbReference type="Proteomes" id="UP000001012">
    <property type="component" value="Chromosome"/>
</dbReference>
<dbReference type="GO" id="GO:0005737">
    <property type="term" value="C:cytoplasm"/>
    <property type="evidence" value="ECO:0007669"/>
    <property type="project" value="UniProtKB-ARBA"/>
</dbReference>
<dbReference type="GO" id="GO:0015935">
    <property type="term" value="C:small ribosomal subunit"/>
    <property type="evidence" value="ECO:0007669"/>
    <property type="project" value="InterPro"/>
</dbReference>
<dbReference type="GO" id="GO:0019843">
    <property type="term" value="F:rRNA binding"/>
    <property type="evidence" value="ECO:0007669"/>
    <property type="project" value="UniProtKB-UniRule"/>
</dbReference>
<dbReference type="GO" id="GO:0003735">
    <property type="term" value="F:structural constituent of ribosome"/>
    <property type="evidence" value="ECO:0007669"/>
    <property type="project" value="InterPro"/>
</dbReference>
<dbReference type="GO" id="GO:0000028">
    <property type="term" value="P:ribosomal small subunit assembly"/>
    <property type="evidence" value="ECO:0007669"/>
    <property type="project" value="TreeGrafter"/>
</dbReference>
<dbReference type="GO" id="GO:0006412">
    <property type="term" value="P:translation"/>
    <property type="evidence" value="ECO:0007669"/>
    <property type="project" value="UniProtKB-UniRule"/>
</dbReference>
<dbReference type="FunFam" id="3.30.860.10:FF:000001">
    <property type="entry name" value="30S ribosomal protein S19"/>
    <property type="match status" value="1"/>
</dbReference>
<dbReference type="Gene3D" id="3.30.860.10">
    <property type="entry name" value="30s Ribosomal Protein S19, Chain A"/>
    <property type="match status" value="1"/>
</dbReference>
<dbReference type="HAMAP" id="MF_00531">
    <property type="entry name" value="Ribosomal_uS19"/>
    <property type="match status" value="1"/>
</dbReference>
<dbReference type="InterPro" id="IPR002222">
    <property type="entry name" value="Ribosomal_uS19"/>
</dbReference>
<dbReference type="InterPro" id="IPR005732">
    <property type="entry name" value="Ribosomal_uS19_bac-type"/>
</dbReference>
<dbReference type="InterPro" id="IPR020934">
    <property type="entry name" value="Ribosomal_uS19_CS"/>
</dbReference>
<dbReference type="InterPro" id="IPR023575">
    <property type="entry name" value="Ribosomal_uS19_SF"/>
</dbReference>
<dbReference type="NCBIfam" id="TIGR01050">
    <property type="entry name" value="rpsS_bact"/>
    <property type="match status" value="1"/>
</dbReference>
<dbReference type="PANTHER" id="PTHR11880">
    <property type="entry name" value="RIBOSOMAL PROTEIN S19P FAMILY MEMBER"/>
    <property type="match status" value="1"/>
</dbReference>
<dbReference type="PANTHER" id="PTHR11880:SF8">
    <property type="entry name" value="SMALL RIBOSOMAL SUBUNIT PROTEIN US19M"/>
    <property type="match status" value="1"/>
</dbReference>
<dbReference type="Pfam" id="PF00203">
    <property type="entry name" value="Ribosomal_S19"/>
    <property type="match status" value="1"/>
</dbReference>
<dbReference type="PIRSF" id="PIRSF002144">
    <property type="entry name" value="Ribosomal_S19"/>
    <property type="match status" value="1"/>
</dbReference>
<dbReference type="PRINTS" id="PR00975">
    <property type="entry name" value="RIBOSOMALS19"/>
</dbReference>
<dbReference type="SUPFAM" id="SSF54570">
    <property type="entry name" value="Ribosomal protein S19"/>
    <property type="match status" value="1"/>
</dbReference>
<dbReference type="PROSITE" id="PS00323">
    <property type="entry name" value="RIBOSOMAL_S19"/>
    <property type="match status" value="1"/>
</dbReference>
<feature type="chain" id="PRO_0000265343" description="Small ribosomal subunit protein uS19">
    <location>
        <begin position="1"/>
        <end position="88"/>
    </location>
</feature>
<name>RS19_CHLAB</name>
<organism>
    <name type="scientific">Chlamydia abortus (strain DSM 27085 / S26/3)</name>
    <name type="common">Chlamydophila abortus</name>
    <dbReference type="NCBI Taxonomy" id="218497"/>
    <lineage>
        <taxon>Bacteria</taxon>
        <taxon>Pseudomonadati</taxon>
        <taxon>Chlamydiota</taxon>
        <taxon>Chlamydiia</taxon>
        <taxon>Chlamydiales</taxon>
        <taxon>Chlamydiaceae</taxon>
        <taxon>Chlamydia/Chlamydophila group</taxon>
        <taxon>Chlamydia</taxon>
    </lineage>
</organism>
<accession>Q5L716</accession>
<protein>
    <recommendedName>
        <fullName evidence="1">Small ribosomal subunit protein uS19</fullName>
    </recommendedName>
    <alternativeName>
        <fullName evidence="2">30S ribosomal protein S19</fullName>
    </alternativeName>
</protein>
<sequence length="88" mass="10135">MSRSLRKGPFVDHSLIKKVRAMNLLEKKTPIKTWSRRSMITPEMIGHTFEVHNGKKFLTVFVSETMVGHKLGEFSPTRIFKSHPVKKG</sequence>
<reference key="1">
    <citation type="journal article" date="2005" name="Genome Res.">
        <title>The Chlamydophila abortus genome sequence reveals an array of variable proteins that contribute to interspecies variation.</title>
        <authorList>
            <person name="Thomson N.R."/>
            <person name="Yeats C."/>
            <person name="Bell K."/>
            <person name="Holden M.T.G."/>
            <person name="Bentley S.D."/>
            <person name="Livingstone M."/>
            <person name="Cerdeno-Tarraga A.-M."/>
            <person name="Harris B."/>
            <person name="Doggett J."/>
            <person name="Ormond D."/>
            <person name="Mungall K."/>
            <person name="Clarke K."/>
            <person name="Feltwell T."/>
            <person name="Hance Z."/>
            <person name="Sanders M."/>
            <person name="Quail M.A."/>
            <person name="Price C."/>
            <person name="Barrell B.G."/>
            <person name="Parkhill J."/>
            <person name="Longbottom D."/>
        </authorList>
    </citation>
    <scope>NUCLEOTIDE SEQUENCE [LARGE SCALE GENOMIC DNA]</scope>
    <source>
        <strain>DSM 27085 / S26/3</strain>
    </source>
</reference>